<protein>
    <recommendedName>
        <fullName evidence="1">Transcriptional repressor NrdR</fullName>
    </recommendedName>
</protein>
<gene>
    <name evidence="1" type="primary">nrdR</name>
    <name type="ordered locus">CKL_1344</name>
</gene>
<name>NRDR_CLOK5</name>
<accession>A5N7V5</accession>
<proteinExistence type="inferred from homology"/>
<keyword id="KW-0067">ATP-binding</keyword>
<keyword id="KW-0238">DNA-binding</keyword>
<keyword id="KW-0479">Metal-binding</keyword>
<keyword id="KW-0547">Nucleotide-binding</keyword>
<keyword id="KW-1185">Reference proteome</keyword>
<keyword id="KW-0678">Repressor</keyword>
<keyword id="KW-0804">Transcription</keyword>
<keyword id="KW-0805">Transcription regulation</keyword>
<keyword id="KW-0862">Zinc</keyword>
<keyword id="KW-0863">Zinc-finger</keyword>
<feature type="chain" id="PRO_1000080735" description="Transcriptional repressor NrdR">
    <location>
        <begin position="1"/>
        <end position="151"/>
    </location>
</feature>
<feature type="domain" description="ATP-cone" evidence="1">
    <location>
        <begin position="49"/>
        <end position="139"/>
    </location>
</feature>
<feature type="zinc finger region" evidence="1">
    <location>
        <begin position="3"/>
        <end position="34"/>
    </location>
</feature>
<sequence length="151" mass="17783">MKCPYCGYGESKVVDSRATDDKMAIRRRRECLKCNKRYTTYEKIENVPLLVIKKNMSREYFDRTKILNGLMKACQKRPVSRKQIEEIADEVEKKISNSVLTEINSSDIGEMIMESLKKVDEVSYVRFASVYRQFKDINTFMEEIKNLISNR</sequence>
<dbReference type="EMBL" id="CP000673">
    <property type="protein sequence ID" value="EDK33386.1"/>
    <property type="molecule type" value="Genomic_DNA"/>
</dbReference>
<dbReference type="RefSeq" id="WP_012101733.1">
    <property type="nucleotide sequence ID" value="NC_009706.1"/>
</dbReference>
<dbReference type="SMR" id="A5N7V5"/>
<dbReference type="STRING" id="431943.CKL_1344"/>
<dbReference type="KEGG" id="ckl:CKL_1344"/>
<dbReference type="eggNOG" id="COG1327">
    <property type="taxonomic scope" value="Bacteria"/>
</dbReference>
<dbReference type="HOGENOM" id="CLU_108412_0_0_9"/>
<dbReference type="Proteomes" id="UP000002411">
    <property type="component" value="Chromosome"/>
</dbReference>
<dbReference type="GO" id="GO:0005524">
    <property type="term" value="F:ATP binding"/>
    <property type="evidence" value="ECO:0007669"/>
    <property type="project" value="UniProtKB-KW"/>
</dbReference>
<dbReference type="GO" id="GO:0003677">
    <property type="term" value="F:DNA binding"/>
    <property type="evidence" value="ECO:0007669"/>
    <property type="project" value="UniProtKB-KW"/>
</dbReference>
<dbReference type="GO" id="GO:0008270">
    <property type="term" value="F:zinc ion binding"/>
    <property type="evidence" value="ECO:0007669"/>
    <property type="project" value="UniProtKB-UniRule"/>
</dbReference>
<dbReference type="GO" id="GO:0045892">
    <property type="term" value="P:negative regulation of DNA-templated transcription"/>
    <property type="evidence" value="ECO:0007669"/>
    <property type="project" value="UniProtKB-UniRule"/>
</dbReference>
<dbReference type="HAMAP" id="MF_00440">
    <property type="entry name" value="NrdR"/>
    <property type="match status" value="1"/>
</dbReference>
<dbReference type="InterPro" id="IPR005144">
    <property type="entry name" value="ATP-cone_dom"/>
</dbReference>
<dbReference type="InterPro" id="IPR055173">
    <property type="entry name" value="NrdR-like_N"/>
</dbReference>
<dbReference type="InterPro" id="IPR003796">
    <property type="entry name" value="RNR_NrdR-like"/>
</dbReference>
<dbReference type="NCBIfam" id="TIGR00244">
    <property type="entry name" value="transcriptional regulator NrdR"/>
    <property type="match status" value="1"/>
</dbReference>
<dbReference type="PANTHER" id="PTHR30455">
    <property type="entry name" value="TRANSCRIPTIONAL REPRESSOR NRDR"/>
    <property type="match status" value="1"/>
</dbReference>
<dbReference type="PANTHER" id="PTHR30455:SF2">
    <property type="entry name" value="TRANSCRIPTIONAL REPRESSOR NRDR"/>
    <property type="match status" value="1"/>
</dbReference>
<dbReference type="Pfam" id="PF03477">
    <property type="entry name" value="ATP-cone"/>
    <property type="match status" value="1"/>
</dbReference>
<dbReference type="Pfam" id="PF22811">
    <property type="entry name" value="Zn_ribbon_NrdR"/>
    <property type="match status" value="1"/>
</dbReference>
<dbReference type="PROSITE" id="PS51161">
    <property type="entry name" value="ATP_CONE"/>
    <property type="match status" value="1"/>
</dbReference>
<reference key="1">
    <citation type="journal article" date="2008" name="Proc. Natl. Acad. Sci. U.S.A.">
        <title>The genome of Clostridium kluyveri, a strict anaerobe with unique metabolic features.</title>
        <authorList>
            <person name="Seedorf H."/>
            <person name="Fricke W.F."/>
            <person name="Veith B."/>
            <person name="Brueggemann H."/>
            <person name="Liesegang H."/>
            <person name="Strittmatter A."/>
            <person name="Miethke M."/>
            <person name="Buckel W."/>
            <person name="Hinderberger J."/>
            <person name="Li F."/>
            <person name="Hagemeier C."/>
            <person name="Thauer R.K."/>
            <person name="Gottschalk G."/>
        </authorList>
    </citation>
    <scope>NUCLEOTIDE SEQUENCE [LARGE SCALE GENOMIC DNA]</scope>
    <source>
        <strain>ATCC 8527 / DSM 555 / NBRC 12016 / NCIMB 10680 / K1</strain>
    </source>
</reference>
<organism>
    <name type="scientific">Clostridium kluyveri (strain ATCC 8527 / DSM 555 / NBRC 12016 / NCIMB 10680 / K1)</name>
    <dbReference type="NCBI Taxonomy" id="431943"/>
    <lineage>
        <taxon>Bacteria</taxon>
        <taxon>Bacillati</taxon>
        <taxon>Bacillota</taxon>
        <taxon>Clostridia</taxon>
        <taxon>Eubacteriales</taxon>
        <taxon>Clostridiaceae</taxon>
        <taxon>Clostridium</taxon>
    </lineage>
</organism>
<comment type="function">
    <text evidence="1">Negatively regulates transcription of bacterial ribonucleotide reductase nrd genes and operons by binding to NrdR-boxes.</text>
</comment>
<comment type="cofactor">
    <cofactor evidence="1">
        <name>Zn(2+)</name>
        <dbReference type="ChEBI" id="CHEBI:29105"/>
    </cofactor>
    <text evidence="1">Binds 1 zinc ion.</text>
</comment>
<comment type="similarity">
    <text evidence="1">Belongs to the NrdR family.</text>
</comment>
<evidence type="ECO:0000255" key="1">
    <source>
        <dbReference type="HAMAP-Rule" id="MF_00440"/>
    </source>
</evidence>